<feature type="chain" id="PRO_1000142622" description="Large ribosomal subunit protein uL18">
    <location>
        <begin position="1"/>
        <end position="123"/>
    </location>
</feature>
<sequence>MSVAILGKGKKVALKRRHARIRKRISGTPERPRLVVTRSNRHMVAQVVDDTKGITLVSASTLQADFAGFEGTKTEAAKKVGELIAEKAKAAGITAVVFDRGGNKYTGRVAAVADGAREGGLAL</sequence>
<name>RL18_BIFLD</name>
<gene>
    <name evidence="1" type="primary">rplR</name>
    <name type="ordered locus">BLD_1723</name>
</gene>
<reference key="1">
    <citation type="journal article" date="2008" name="BMC Genomics">
        <title>Comparative genomic analysis of the gut bacterium Bifidobacterium longum reveals loci susceptible to deletion during pure culture growth.</title>
        <authorList>
            <person name="Lee J.H."/>
            <person name="Karamychev V.N."/>
            <person name="Kozyavkin S.A."/>
            <person name="Mills D."/>
            <person name="Pavlov A.R."/>
            <person name="Pavlova N.V."/>
            <person name="Polouchine N.N."/>
            <person name="Richardson P.M."/>
            <person name="Shakhova V.V."/>
            <person name="Slesarev A.I."/>
            <person name="Weimer B."/>
            <person name="O'Sullivan D.J."/>
        </authorList>
    </citation>
    <scope>NUCLEOTIDE SEQUENCE [LARGE SCALE GENOMIC DNA]</scope>
    <source>
        <strain>DJO10A</strain>
    </source>
</reference>
<protein>
    <recommendedName>
        <fullName evidence="1">Large ribosomal subunit protein uL18</fullName>
    </recommendedName>
    <alternativeName>
        <fullName evidence="2">50S ribosomal protein L18</fullName>
    </alternativeName>
</protein>
<dbReference type="EMBL" id="CP000605">
    <property type="protein sequence ID" value="ACD99168.1"/>
    <property type="molecule type" value="Genomic_DNA"/>
</dbReference>
<dbReference type="RefSeq" id="WP_007053041.1">
    <property type="nucleotide sequence ID" value="NC_010816.1"/>
</dbReference>
<dbReference type="SMR" id="B3DQD0"/>
<dbReference type="GeneID" id="69578881"/>
<dbReference type="KEGG" id="blj:BLD_1723"/>
<dbReference type="HOGENOM" id="CLU_098841_0_1_11"/>
<dbReference type="Proteomes" id="UP000002419">
    <property type="component" value="Chromosome"/>
</dbReference>
<dbReference type="GO" id="GO:0022625">
    <property type="term" value="C:cytosolic large ribosomal subunit"/>
    <property type="evidence" value="ECO:0007669"/>
    <property type="project" value="TreeGrafter"/>
</dbReference>
<dbReference type="GO" id="GO:0008097">
    <property type="term" value="F:5S rRNA binding"/>
    <property type="evidence" value="ECO:0007669"/>
    <property type="project" value="TreeGrafter"/>
</dbReference>
<dbReference type="GO" id="GO:0003735">
    <property type="term" value="F:structural constituent of ribosome"/>
    <property type="evidence" value="ECO:0007669"/>
    <property type="project" value="InterPro"/>
</dbReference>
<dbReference type="GO" id="GO:0006412">
    <property type="term" value="P:translation"/>
    <property type="evidence" value="ECO:0007669"/>
    <property type="project" value="UniProtKB-UniRule"/>
</dbReference>
<dbReference type="CDD" id="cd00432">
    <property type="entry name" value="Ribosomal_L18_L5e"/>
    <property type="match status" value="1"/>
</dbReference>
<dbReference type="FunFam" id="3.30.420.100:FF:000001">
    <property type="entry name" value="50S ribosomal protein L18"/>
    <property type="match status" value="1"/>
</dbReference>
<dbReference type="Gene3D" id="3.30.420.100">
    <property type="match status" value="1"/>
</dbReference>
<dbReference type="HAMAP" id="MF_01337_B">
    <property type="entry name" value="Ribosomal_uL18_B"/>
    <property type="match status" value="1"/>
</dbReference>
<dbReference type="InterPro" id="IPR004389">
    <property type="entry name" value="Ribosomal_uL18_bac-type"/>
</dbReference>
<dbReference type="InterPro" id="IPR005484">
    <property type="entry name" value="Ribosomal_uL18_bac/euk"/>
</dbReference>
<dbReference type="NCBIfam" id="TIGR00060">
    <property type="entry name" value="L18_bact"/>
    <property type="match status" value="1"/>
</dbReference>
<dbReference type="PANTHER" id="PTHR12899">
    <property type="entry name" value="39S RIBOSOMAL PROTEIN L18, MITOCHONDRIAL"/>
    <property type="match status" value="1"/>
</dbReference>
<dbReference type="PANTHER" id="PTHR12899:SF3">
    <property type="entry name" value="LARGE RIBOSOMAL SUBUNIT PROTEIN UL18M"/>
    <property type="match status" value="1"/>
</dbReference>
<dbReference type="Pfam" id="PF00861">
    <property type="entry name" value="Ribosomal_L18p"/>
    <property type="match status" value="1"/>
</dbReference>
<dbReference type="SUPFAM" id="SSF53137">
    <property type="entry name" value="Translational machinery components"/>
    <property type="match status" value="1"/>
</dbReference>
<evidence type="ECO:0000255" key="1">
    <source>
        <dbReference type="HAMAP-Rule" id="MF_01337"/>
    </source>
</evidence>
<evidence type="ECO:0000305" key="2"/>
<organism>
    <name type="scientific">Bifidobacterium longum (strain DJO10A)</name>
    <dbReference type="NCBI Taxonomy" id="205913"/>
    <lineage>
        <taxon>Bacteria</taxon>
        <taxon>Bacillati</taxon>
        <taxon>Actinomycetota</taxon>
        <taxon>Actinomycetes</taxon>
        <taxon>Bifidobacteriales</taxon>
        <taxon>Bifidobacteriaceae</taxon>
        <taxon>Bifidobacterium</taxon>
    </lineage>
</organism>
<proteinExistence type="inferred from homology"/>
<accession>B3DQD0</accession>
<comment type="function">
    <text evidence="1">This is one of the proteins that bind and probably mediate the attachment of the 5S RNA into the large ribosomal subunit, where it forms part of the central protuberance.</text>
</comment>
<comment type="subunit">
    <text evidence="1">Part of the 50S ribosomal subunit; part of the 5S rRNA/L5/L18/L25 subcomplex. Contacts the 5S and 23S rRNAs.</text>
</comment>
<comment type="similarity">
    <text evidence="1">Belongs to the universal ribosomal protein uL18 family.</text>
</comment>
<keyword id="KW-0687">Ribonucleoprotein</keyword>
<keyword id="KW-0689">Ribosomal protein</keyword>
<keyword id="KW-0694">RNA-binding</keyword>
<keyword id="KW-0699">rRNA-binding</keyword>